<sequence length="177" mass="18551">MARADKATAVANIAEQFKAATAALITEYRGLTVANLAELRRSLTGSASYAVAKNTLIKRAASEVGIEGLDELFAGPTAIAFVTGEPVDAAKAIKTFAKEHKALVIKGGYMDGHPMTVAEVERIADLESREVLLAKLAGAMKGTFAKAIGLFNAPTSQMARLTAALQEKKAFEPASAE</sequence>
<accession>B8ZSD0</accession>
<name>RL10_MYCLB</name>
<organism>
    <name type="scientific">Mycobacterium leprae (strain Br4923)</name>
    <dbReference type="NCBI Taxonomy" id="561304"/>
    <lineage>
        <taxon>Bacteria</taxon>
        <taxon>Bacillati</taxon>
        <taxon>Actinomycetota</taxon>
        <taxon>Actinomycetes</taxon>
        <taxon>Mycobacteriales</taxon>
        <taxon>Mycobacteriaceae</taxon>
        <taxon>Mycobacterium</taxon>
    </lineage>
</organism>
<gene>
    <name evidence="1" type="primary">rplJ</name>
    <name type="ordered locus">MLBr01896</name>
</gene>
<proteinExistence type="inferred from homology"/>
<evidence type="ECO:0000255" key="1">
    <source>
        <dbReference type="HAMAP-Rule" id="MF_00362"/>
    </source>
</evidence>
<evidence type="ECO:0000305" key="2"/>
<reference key="1">
    <citation type="journal article" date="2009" name="Nat. Genet.">
        <title>Comparative genomic and phylogeographic analysis of Mycobacterium leprae.</title>
        <authorList>
            <person name="Monot M."/>
            <person name="Honore N."/>
            <person name="Garnier T."/>
            <person name="Zidane N."/>
            <person name="Sherafi D."/>
            <person name="Paniz-Mondolfi A."/>
            <person name="Matsuoka M."/>
            <person name="Taylor G.M."/>
            <person name="Donoghue H.D."/>
            <person name="Bouwman A."/>
            <person name="Mays S."/>
            <person name="Watson C."/>
            <person name="Lockwood D."/>
            <person name="Khamispour A."/>
            <person name="Dowlati Y."/>
            <person name="Jianping S."/>
            <person name="Rea T.H."/>
            <person name="Vera-Cabrera L."/>
            <person name="Stefani M.M."/>
            <person name="Banu S."/>
            <person name="Macdonald M."/>
            <person name="Sapkota B.R."/>
            <person name="Spencer J.S."/>
            <person name="Thomas J."/>
            <person name="Harshman K."/>
            <person name="Singh P."/>
            <person name="Busso P."/>
            <person name="Gattiker A."/>
            <person name="Rougemont J."/>
            <person name="Brennan P.J."/>
            <person name="Cole S.T."/>
        </authorList>
    </citation>
    <scope>NUCLEOTIDE SEQUENCE [LARGE SCALE GENOMIC DNA]</scope>
    <source>
        <strain>Br4923</strain>
    </source>
</reference>
<keyword id="KW-0687">Ribonucleoprotein</keyword>
<keyword id="KW-0689">Ribosomal protein</keyword>
<keyword id="KW-0694">RNA-binding</keyword>
<keyword id="KW-0699">rRNA-binding</keyword>
<feature type="chain" id="PRO_1000195558" description="Large ribosomal subunit protein uL10">
    <location>
        <begin position="1"/>
        <end position="177"/>
    </location>
</feature>
<comment type="function">
    <text evidence="1">Forms part of the ribosomal stalk, playing a central role in the interaction of the ribosome with GTP-bound translation factors.</text>
</comment>
<comment type="subunit">
    <text evidence="1">Part of the ribosomal stalk of the 50S ribosomal subunit. The N-terminus interacts with L11 and the large rRNA to form the base of the stalk. The C-terminus forms an elongated spine to which L12 dimers bind in a sequential fashion forming a multimeric L10(L12)X complex.</text>
</comment>
<comment type="similarity">
    <text evidence="1">Belongs to the universal ribosomal protein uL10 family.</text>
</comment>
<protein>
    <recommendedName>
        <fullName evidence="1">Large ribosomal subunit protein uL10</fullName>
    </recommendedName>
    <alternativeName>
        <fullName evidence="2">50S ribosomal protein L10</fullName>
    </alternativeName>
</protein>
<dbReference type="EMBL" id="FM211192">
    <property type="protein sequence ID" value="CAR71992.1"/>
    <property type="molecule type" value="Genomic_DNA"/>
</dbReference>
<dbReference type="SMR" id="B8ZSD0"/>
<dbReference type="KEGG" id="mlb:MLBr01896"/>
<dbReference type="HOGENOM" id="CLU_092227_1_0_11"/>
<dbReference type="Proteomes" id="UP000006900">
    <property type="component" value="Chromosome"/>
</dbReference>
<dbReference type="GO" id="GO:0015934">
    <property type="term" value="C:large ribosomal subunit"/>
    <property type="evidence" value="ECO:0007669"/>
    <property type="project" value="InterPro"/>
</dbReference>
<dbReference type="GO" id="GO:0070180">
    <property type="term" value="F:large ribosomal subunit rRNA binding"/>
    <property type="evidence" value="ECO:0007669"/>
    <property type="project" value="UniProtKB-UniRule"/>
</dbReference>
<dbReference type="GO" id="GO:0003735">
    <property type="term" value="F:structural constituent of ribosome"/>
    <property type="evidence" value="ECO:0007669"/>
    <property type="project" value="InterPro"/>
</dbReference>
<dbReference type="GO" id="GO:0006412">
    <property type="term" value="P:translation"/>
    <property type="evidence" value="ECO:0007669"/>
    <property type="project" value="UniProtKB-UniRule"/>
</dbReference>
<dbReference type="CDD" id="cd05797">
    <property type="entry name" value="Ribosomal_L10"/>
    <property type="match status" value="1"/>
</dbReference>
<dbReference type="FunFam" id="3.30.70.1730:FF:000003">
    <property type="entry name" value="50S ribosomal protein L10"/>
    <property type="match status" value="1"/>
</dbReference>
<dbReference type="Gene3D" id="3.30.70.1730">
    <property type="match status" value="1"/>
</dbReference>
<dbReference type="Gene3D" id="6.10.250.290">
    <property type="match status" value="1"/>
</dbReference>
<dbReference type="HAMAP" id="MF_00362">
    <property type="entry name" value="Ribosomal_uL10"/>
    <property type="match status" value="1"/>
</dbReference>
<dbReference type="InterPro" id="IPR001790">
    <property type="entry name" value="Ribosomal_uL10"/>
</dbReference>
<dbReference type="InterPro" id="IPR043141">
    <property type="entry name" value="Ribosomal_uL10-like_sf"/>
</dbReference>
<dbReference type="InterPro" id="IPR022973">
    <property type="entry name" value="Ribosomal_uL10_bac"/>
</dbReference>
<dbReference type="InterPro" id="IPR047865">
    <property type="entry name" value="Ribosomal_uL10_bac_type"/>
</dbReference>
<dbReference type="InterPro" id="IPR002363">
    <property type="entry name" value="Ribosomal_uL10_CS_bac"/>
</dbReference>
<dbReference type="NCBIfam" id="NF000955">
    <property type="entry name" value="PRK00099.1-1"/>
    <property type="match status" value="1"/>
</dbReference>
<dbReference type="PANTHER" id="PTHR11560">
    <property type="entry name" value="39S RIBOSOMAL PROTEIN L10, MITOCHONDRIAL"/>
    <property type="match status" value="1"/>
</dbReference>
<dbReference type="Pfam" id="PF00466">
    <property type="entry name" value="Ribosomal_L10"/>
    <property type="match status" value="1"/>
</dbReference>
<dbReference type="SUPFAM" id="SSF160369">
    <property type="entry name" value="Ribosomal protein L10-like"/>
    <property type="match status" value="1"/>
</dbReference>
<dbReference type="PROSITE" id="PS01109">
    <property type="entry name" value="RIBOSOMAL_L10"/>
    <property type="match status" value="1"/>
</dbReference>